<dbReference type="EMBL" id="AP006627">
    <property type="protein sequence ID" value="BAD64830.1"/>
    <property type="molecule type" value="Genomic_DNA"/>
</dbReference>
<dbReference type="RefSeq" id="WP_011247138.1">
    <property type="nucleotide sequence ID" value="NC_006582.1"/>
</dbReference>
<dbReference type="SMR" id="Q5WFN0"/>
<dbReference type="STRING" id="66692.ABC2295"/>
<dbReference type="KEGG" id="bcl:ABC2295"/>
<dbReference type="eggNOG" id="COG2739">
    <property type="taxonomic scope" value="Bacteria"/>
</dbReference>
<dbReference type="HOGENOM" id="CLU_129218_1_0_9"/>
<dbReference type="OrthoDB" id="6392at2"/>
<dbReference type="Proteomes" id="UP000001168">
    <property type="component" value="Chromosome"/>
</dbReference>
<dbReference type="Gene3D" id="1.10.10.10">
    <property type="entry name" value="Winged helix-like DNA-binding domain superfamily/Winged helix DNA-binding domain"/>
    <property type="match status" value="1"/>
</dbReference>
<dbReference type="HAMAP" id="MF_00245">
    <property type="entry name" value="UPF0122"/>
    <property type="match status" value="1"/>
</dbReference>
<dbReference type="InterPro" id="IPR013324">
    <property type="entry name" value="RNA_pol_sigma_r3/r4-like"/>
</dbReference>
<dbReference type="InterPro" id="IPR007394">
    <property type="entry name" value="UPF0122"/>
</dbReference>
<dbReference type="InterPro" id="IPR054831">
    <property type="entry name" value="UPF0122_fam_protein"/>
</dbReference>
<dbReference type="InterPro" id="IPR036388">
    <property type="entry name" value="WH-like_DNA-bd_sf"/>
</dbReference>
<dbReference type="NCBIfam" id="NF001068">
    <property type="entry name" value="PRK00118.1-4"/>
    <property type="match status" value="1"/>
</dbReference>
<dbReference type="NCBIfam" id="NF001070">
    <property type="entry name" value="PRK00118.1-6"/>
    <property type="match status" value="1"/>
</dbReference>
<dbReference type="NCBIfam" id="NF045758">
    <property type="entry name" value="YlxM"/>
    <property type="match status" value="1"/>
</dbReference>
<dbReference type="PANTHER" id="PTHR40083">
    <property type="entry name" value="UPF0122 PROTEIN CBO2450/CLC_2298"/>
    <property type="match status" value="1"/>
</dbReference>
<dbReference type="PANTHER" id="PTHR40083:SF1">
    <property type="entry name" value="UPF0122 PROTEIN YLXM"/>
    <property type="match status" value="1"/>
</dbReference>
<dbReference type="Pfam" id="PF04297">
    <property type="entry name" value="UPF0122"/>
    <property type="match status" value="1"/>
</dbReference>
<dbReference type="SUPFAM" id="SSF88659">
    <property type="entry name" value="Sigma3 and sigma4 domains of RNA polymerase sigma factors"/>
    <property type="match status" value="1"/>
</dbReference>
<evidence type="ECO:0000255" key="1">
    <source>
        <dbReference type="HAMAP-Rule" id="MF_00245"/>
    </source>
</evidence>
<accession>Q5WFN0</accession>
<keyword id="KW-1185">Reference proteome</keyword>
<comment type="function">
    <text evidence="1">Might take part in the signal recognition particle (SRP) pathway. This is inferred from the conservation of its genetic proximity to ftsY/ffh. May be a regulatory protein.</text>
</comment>
<comment type="similarity">
    <text evidence="1">Belongs to the UPF0122 family.</text>
</comment>
<organism>
    <name type="scientific">Shouchella clausii (strain KSM-K16)</name>
    <name type="common">Alkalihalobacillus clausii</name>
    <dbReference type="NCBI Taxonomy" id="66692"/>
    <lineage>
        <taxon>Bacteria</taxon>
        <taxon>Bacillati</taxon>
        <taxon>Bacillota</taxon>
        <taxon>Bacilli</taxon>
        <taxon>Bacillales</taxon>
        <taxon>Bacillaceae</taxon>
        <taxon>Shouchella</taxon>
    </lineage>
</organism>
<gene>
    <name type="ordered locus">ABC2295</name>
</gene>
<proteinExistence type="inferred from homology"/>
<sequence>MLDKTLRMNYLFDFYHSLLTEKQRNYMSYYYLDDLSLGEIADEYDVSRQAVYDNIRRTEAMLEEYEQKLRLLEKFETRRSLLAELRKAIASDQAVEACNSLIDRIEKLD</sequence>
<feature type="chain" id="PRO_1000012520" description="UPF0122 protein ABC2295">
    <location>
        <begin position="1"/>
        <end position="109"/>
    </location>
</feature>
<protein>
    <recommendedName>
        <fullName evidence="1">UPF0122 protein ABC2295</fullName>
    </recommendedName>
</protein>
<name>Y2295_SHOC1</name>
<reference key="1">
    <citation type="submission" date="2003-10" db="EMBL/GenBank/DDBJ databases">
        <title>The complete genome sequence of the alkaliphilic Bacillus clausii KSM-K16.</title>
        <authorList>
            <person name="Takaki Y."/>
            <person name="Kageyama Y."/>
            <person name="Shimamura S."/>
            <person name="Suzuki H."/>
            <person name="Nishi S."/>
            <person name="Hatada Y."/>
            <person name="Kawai S."/>
            <person name="Ito S."/>
            <person name="Horikoshi K."/>
        </authorList>
    </citation>
    <scope>NUCLEOTIDE SEQUENCE [LARGE SCALE GENOMIC DNA]</scope>
    <source>
        <strain>KSM-K16</strain>
    </source>
</reference>